<organism>
    <name type="scientific">Bacillus licheniformis (strain ATCC 14580 / DSM 13 / JCM 2505 / CCUG 7422 / NBRC 12200 / NCIMB 9375 / NCTC 10341 / NRRL NRS-1264 / Gibson 46)</name>
    <dbReference type="NCBI Taxonomy" id="279010"/>
    <lineage>
        <taxon>Bacteria</taxon>
        <taxon>Bacillati</taxon>
        <taxon>Bacillota</taxon>
        <taxon>Bacilli</taxon>
        <taxon>Bacillales</taxon>
        <taxon>Bacillaceae</taxon>
        <taxon>Bacillus</taxon>
    </lineage>
</organism>
<dbReference type="EMBL" id="CP000002">
    <property type="protein sequence ID" value="AAU22167.1"/>
    <property type="molecule type" value="Genomic_DNA"/>
</dbReference>
<dbReference type="EMBL" id="AE017333">
    <property type="protein sequence ID" value="AAU39521.1"/>
    <property type="molecule type" value="Genomic_DNA"/>
</dbReference>
<dbReference type="RefSeq" id="WP_003179155.1">
    <property type="nucleotide sequence ID" value="NC_006322.1"/>
</dbReference>
<dbReference type="SMR" id="Q65N43"/>
<dbReference type="STRING" id="279010.BL05043"/>
<dbReference type="KEGG" id="bld:BLi00565"/>
<dbReference type="KEGG" id="bli:BL05043"/>
<dbReference type="eggNOG" id="COG3091">
    <property type="taxonomic scope" value="Bacteria"/>
</dbReference>
<dbReference type="HOGENOM" id="CLU_123820_0_0_9"/>
<dbReference type="Proteomes" id="UP000000606">
    <property type="component" value="Chromosome"/>
</dbReference>
<dbReference type="GO" id="GO:0005737">
    <property type="term" value="C:cytoplasm"/>
    <property type="evidence" value="ECO:0007669"/>
    <property type="project" value="UniProtKB-SubCell"/>
</dbReference>
<dbReference type="GO" id="GO:0008270">
    <property type="term" value="F:zinc ion binding"/>
    <property type="evidence" value="ECO:0007669"/>
    <property type="project" value="UniProtKB-UniRule"/>
</dbReference>
<dbReference type="GO" id="GO:0006950">
    <property type="term" value="P:response to stress"/>
    <property type="evidence" value="ECO:0007669"/>
    <property type="project" value="UniProtKB-ARBA"/>
</dbReference>
<dbReference type="Gene3D" id="3.30.2010.10">
    <property type="entry name" value="Metalloproteases ('zincins'), catalytic domain"/>
    <property type="match status" value="1"/>
</dbReference>
<dbReference type="HAMAP" id="MF_00745">
    <property type="entry name" value="SprT_like"/>
    <property type="match status" value="1"/>
</dbReference>
<dbReference type="InterPro" id="IPR006640">
    <property type="entry name" value="SprT-like_domain"/>
</dbReference>
<dbReference type="InterPro" id="IPR035240">
    <property type="entry name" value="SprT_Zn_ribbon"/>
</dbReference>
<dbReference type="InterPro" id="IPR023524">
    <property type="entry name" value="Uncharacterised_SprT-like"/>
</dbReference>
<dbReference type="NCBIfam" id="NF003339">
    <property type="entry name" value="PRK04351.1"/>
    <property type="match status" value="1"/>
</dbReference>
<dbReference type="Pfam" id="PF10263">
    <property type="entry name" value="SprT-like"/>
    <property type="match status" value="1"/>
</dbReference>
<dbReference type="Pfam" id="PF17283">
    <property type="entry name" value="Zn_ribbon_SprT"/>
    <property type="match status" value="1"/>
</dbReference>
<dbReference type="SMART" id="SM00731">
    <property type="entry name" value="SprT"/>
    <property type="match status" value="1"/>
</dbReference>
<accession>Q65N43</accession>
<accession>Q62YJ1</accession>
<sequence>MDEQQLQQLTEQLSLTYFKKPFRHRAYFNSRLKTTGGRYLLNSHNIELNKKYLTEHGQKELEGIIKHELCHYHLHLEGKGYKHRDKDFRTLLKEVGAPRFCTPLEKEKKPQRKVRTYKCEACGQTFLRKRKMDTSRYVCGKCGGKIKEIIKKG</sequence>
<evidence type="ECO:0000255" key="1">
    <source>
        <dbReference type="HAMAP-Rule" id="MF_00745"/>
    </source>
</evidence>
<proteinExistence type="inferred from homology"/>
<gene>
    <name type="ordered locus">BLi00565</name>
    <name type="ordered locus">BL05043</name>
</gene>
<reference key="1">
    <citation type="journal article" date="2004" name="J. Mol. Microbiol. Biotechnol.">
        <title>The complete genome sequence of Bacillus licheniformis DSM13, an organism with great industrial potential.</title>
        <authorList>
            <person name="Veith B."/>
            <person name="Herzberg C."/>
            <person name="Steckel S."/>
            <person name="Feesche J."/>
            <person name="Maurer K.H."/>
            <person name="Ehrenreich P."/>
            <person name="Baeumer S."/>
            <person name="Henne A."/>
            <person name="Liesegang H."/>
            <person name="Merkl R."/>
            <person name="Ehrenreich A."/>
            <person name="Gottschalk G."/>
        </authorList>
    </citation>
    <scope>NUCLEOTIDE SEQUENCE [LARGE SCALE GENOMIC DNA]</scope>
    <source>
        <strain>ATCC 14580 / DSM 13 / JCM 2505 / CCUG 7422 / NBRC 12200 / NCIMB 9375 / NCTC 10341 / NRRL NRS-1264 / Gibson 46</strain>
    </source>
</reference>
<reference key="2">
    <citation type="journal article" date="2004" name="Genome Biol.">
        <title>Complete genome sequence of the industrial bacterium Bacillus licheniformis and comparisons with closely related Bacillus species.</title>
        <authorList>
            <person name="Rey M.W."/>
            <person name="Ramaiya P."/>
            <person name="Nelson B.A."/>
            <person name="Brody-Karpin S.D."/>
            <person name="Zaretsky E.J."/>
            <person name="Tang M."/>
            <person name="Lopez de Leon A."/>
            <person name="Xiang H."/>
            <person name="Gusti V."/>
            <person name="Clausen I.G."/>
            <person name="Olsen P.B."/>
            <person name="Rasmussen M.D."/>
            <person name="Andersen J.T."/>
            <person name="Joergensen P.L."/>
            <person name="Larsen T.S."/>
            <person name="Sorokin A."/>
            <person name="Bolotin A."/>
            <person name="Lapidus A."/>
            <person name="Galleron N."/>
            <person name="Ehrlich S.D."/>
            <person name="Berka R.M."/>
        </authorList>
    </citation>
    <scope>NUCLEOTIDE SEQUENCE [LARGE SCALE GENOMIC DNA]</scope>
    <source>
        <strain>ATCC 14580 / DSM 13 / JCM 2505 / CCUG 7422 / NBRC 12200 / NCIMB 9375 / NCTC 10341 / NRRL NRS-1264 / Gibson 46</strain>
    </source>
</reference>
<feature type="chain" id="PRO_1000046510" description="Protein SprT-like">
    <location>
        <begin position="1"/>
        <end position="153"/>
    </location>
</feature>
<feature type="domain" description="SprT-like" evidence="1">
    <location>
        <begin position="6"/>
        <end position="148"/>
    </location>
</feature>
<feature type="active site" evidence="1">
    <location>
        <position position="68"/>
    </location>
</feature>
<feature type="binding site" evidence="1">
    <location>
        <position position="67"/>
    </location>
    <ligand>
        <name>Zn(2+)</name>
        <dbReference type="ChEBI" id="CHEBI:29105"/>
    </ligand>
</feature>
<feature type="binding site" evidence="1">
    <location>
        <position position="71"/>
    </location>
    <ligand>
        <name>Zn(2+)</name>
        <dbReference type="ChEBI" id="CHEBI:29105"/>
    </ligand>
</feature>
<protein>
    <recommendedName>
        <fullName evidence="1">Protein SprT-like</fullName>
    </recommendedName>
</protein>
<keyword id="KW-0963">Cytoplasm</keyword>
<keyword id="KW-0479">Metal-binding</keyword>
<keyword id="KW-1185">Reference proteome</keyword>
<keyword id="KW-0862">Zinc</keyword>
<name>SPRTL_BACLD</name>
<comment type="cofactor">
    <cofactor evidence="1">
        <name>Zn(2+)</name>
        <dbReference type="ChEBI" id="CHEBI:29105"/>
    </cofactor>
    <text evidence="1">Binds 1 zinc ion.</text>
</comment>
<comment type="subcellular location">
    <subcellularLocation>
        <location evidence="1">Cytoplasm</location>
    </subcellularLocation>
</comment>
<comment type="similarity">
    <text evidence="1">Belongs to the SprT family.</text>
</comment>